<reference evidence="9" key="1">
    <citation type="journal article" date="2004" name="Proc. Natl. Acad. Sci. U.S.A.">
        <title>The analysis of large-scale gene expression correlated to the phase changes of the migratory locust.</title>
        <authorList>
            <person name="Kang L."/>
            <person name="Chen X."/>
            <person name="Zhou Y."/>
            <person name="Liu B."/>
            <person name="Zheng W."/>
            <person name="Li R."/>
            <person name="Wang J."/>
            <person name="Yu J."/>
        </authorList>
    </citation>
    <scope>NUCLEOTIDE SEQUENCE [MRNA]</scope>
    <source>
        <tissue>Head</tissue>
    </source>
</reference>
<reference evidence="9" key="2">
    <citation type="journal article" date="2009" name="Ann. N. Y. Acad. Sci.">
        <title>Identification of new members of the (short) neuropeptide F family in locusts and Caenorhabditis elegans.</title>
        <authorList>
            <person name="Clynen E."/>
            <person name="Husson S.J."/>
            <person name="Schoofs L."/>
        </authorList>
    </citation>
    <scope>PROTEIN SEQUENCE OF 52-60</scope>
    <scope>TISSUE SPECIFICITY</scope>
    <scope>MASS SPECTROMETRY</scope>
    <scope>AMIDATION AT PHE-60</scope>
</reference>
<reference evidence="9" key="3">
    <citation type="journal article" date="2006" name="BMC Genomics">
        <title>Annotation of novel neuropeptide precursors in the migratory locust based on transcript screening of a public EST database and mass spectrometry.</title>
        <authorList>
            <person name="Clynen E."/>
            <person name="Huybrechts J."/>
            <person name="Verleyen P."/>
            <person name="De Loof A."/>
            <person name="Schoofs L."/>
        </authorList>
    </citation>
    <scope>IDENTIFICATION</scope>
</reference>
<reference evidence="9" key="4">
    <citation type="journal article" date="2009" name="Insect Biochem. Mol. Biol.">
        <title>Peptidomic survey of the locust neuroendocrine system.</title>
        <authorList>
            <person name="Clynen E."/>
            <person name="Schoofs L."/>
        </authorList>
    </citation>
    <scope>IDENTIFICATION BY MASS SPECTROMETRY</scope>
    <scope>TISSUE SPECIFICITY</scope>
</reference>
<protein>
    <recommendedName>
        <fullName evidence="6 7 8">Neuropeptide F</fullName>
        <shortName evidence="7 8">Lom-NPF</shortName>
        <shortName evidence="7">NPF</shortName>
        <shortName evidence="6">longNPF</shortName>
    </recommendedName>
</protein>
<name>NPF_LOCMI</name>
<feature type="signal peptide" evidence="2">
    <location>
        <begin position="1"/>
        <end position="27"/>
    </location>
</feature>
<feature type="propeptide" id="PRO_0000392443" evidence="4">
    <location>
        <begin position="28"/>
        <end position="51"/>
    </location>
</feature>
<feature type="peptide" id="PRO_0000392444" description="Neuropeptide F" evidence="4">
    <location>
        <begin position="52"/>
        <end position="60"/>
    </location>
</feature>
<feature type="propeptide" id="PRO_0000392445" evidence="4">
    <location>
        <begin position="64"/>
        <end position="92"/>
    </location>
</feature>
<feature type="modified residue" description="Phenylalanine amide" evidence="4">
    <location>
        <position position="60"/>
    </location>
</feature>
<dbReference type="EMBL" id="CO854418">
    <property type="status" value="NOT_ANNOTATED_CDS"/>
    <property type="molecule type" value="mRNA"/>
</dbReference>
<dbReference type="SMR" id="P86442"/>
<dbReference type="GO" id="GO:0005576">
    <property type="term" value="C:extracellular region"/>
    <property type="evidence" value="ECO:0007669"/>
    <property type="project" value="UniProtKB-SubCell"/>
</dbReference>
<dbReference type="GO" id="GO:0007218">
    <property type="term" value="P:neuropeptide signaling pathway"/>
    <property type="evidence" value="ECO:0007669"/>
    <property type="project" value="UniProtKB-KW"/>
</dbReference>
<dbReference type="InterPro" id="IPR020392">
    <property type="entry name" value="Pancreatic_hormone-like_CS"/>
</dbReference>
<dbReference type="PROSITE" id="PS00265">
    <property type="entry name" value="PANCREATIC_HORMONE_1"/>
    <property type="match status" value="1"/>
</dbReference>
<sequence>MSQSRPLALLVVAALVAAAVLVAAAEAQQADGNKLEGLADALKYLQELDRYYSQVARPRFGKRAELRPDVVDDVIPEEMSADKFWRRFARRR</sequence>
<evidence type="ECO:0000250" key="1">
    <source>
        <dbReference type="UniProtKB" id="P86443"/>
    </source>
</evidence>
<evidence type="ECO:0000255" key="2"/>
<evidence type="ECO:0000269" key="3">
    <source>
    </source>
</evidence>
<evidence type="ECO:0000269" key="4">
    <source>
    </source>
</evidence>
<evidence type="ECO:0000269" key="5">
    <source>
    </source>
</evidence>
<evidence type="ECO:0000303" key="6">
    <source>
    </source>
</evidence>
<evidence type="ECO:0000303" key="7">
    <source>
    </source>
</evidence>
<evidence type="ECO:0000303" key="8">
    <source>
    </source>
</evidence>
<evidence type="ECO:0000305" key="9"/>
<accession>P86442</accession>
<comment type="function">
    <text evidence="1">Accelerates ovarian maturation in females.</text>
</comment>
<comment type="subcellular location">
    <subcellularLocation>
        <location evidence="9">Secreted</location>
    </subcellularLocation>
</comment>
<comment type="tissue specificity">
    <text evidence="4 5">Widely expressed in the nervous system. Expressed in corpora cardiaca, hypocerebral ganglion, frontal ganglion, protocerebrum, antennal lobe, tritocerebrum and thoracic ganglia. Not detected in corpora allata, pars intercerebralis, circumesophageal connectives, subesophageal ganglion, abdominal ganglion and abdominal perisympathetic organs.</text>
</comment>
<comment type="mass spectrometry"/>
<comment type="miscellaneous">
    <text evidence="3 4">The nonapeptide is a truncated form of the predicted neuropeptide F sequence. The predicted form, which extends from 28-60, is probably processed to a nonapeptide via cleavage at a K-X(6)-R-Y motif. Initial cleavage by a prohormone convertase presumably occurs C-terminally of Arg-50, with the remaining Tyr-51 removed by an aminopeptidase afterwards. The predicted form might be expressed in ovary or midgut.</text>
</comment>
<comment type="similarity">
    <text evidence="2">Belongs to the NPY family.</text>
</comment>
<organism>
    <name type="scientific">Locusta migratoria</name>
    <name type="common">Migratory locust</name>
    <dbReference type="NCBI Taxonomy" id="7004"/>
    <lineage>
        <taxon>Eukaryota</taxon>
        <taxon>Metazoa</taxon>
        <taxon>Ecdysozoa</taxon>
        <taxon>Arthropoda</taxon>
        <taxon>Hexapoda</taxon>
        <taxon>Insecta</taxon>
        <taxon>Pterygota</taxon>
        <taxon>Neoptera</taxon>
        <taxon>Polyneoptera</taxon>
        <taxon>Orthoptera</taxon>
        <taxon>Caelifera</taxon>
        <taxon>Acrididea</taxon>
        <taxon>Acridomorpha</taxon>
        <taxon>Acridoidea</taxon>
        <taxon>Acrididae</taxon>
        <taxon>Oedipodinae</taxon>
        <taxon>Locusta</taxon>
    </lineage>
</organism>
<proteinExistence type="evidence at protein level"/>
<keyword id="KW-0027">Amidation</keyword>
<keyword id="KW-0165">Cleavage on pair of basic residues</keyword>
<keyword id="KW-0903">Direct protein sequencing</keyword>
<keyword id="KW-0527">Neuropeptide</keyword>
<keyword id="KW-0964">Secreted</keyword>
<keyword id="KW-0732">Signal</keyword>